<accession>Q0BLS9</accession>
<keyword id="KW-0030">Aminoacyl-tRNA synthetase</keyword>
<keyword id="KW-0067">ATP-binding</keyword>
<keyword id="KW-0963">Cytoplasm</keyword>
<keyword id="KW-0436">Ligase</keyword>
<keyword id="KW-0479">Metal-binding</keyword>
<keyword id="KW-0547">Nucleotide-binding</keyword>
<keyword id="KW-0648">Protein biosynthesis</keyword>
<keyword id="KW-0694">RNA-binding</keyword>
<keyword id="KW-0820">tRNA-binding</keyword>
<keyword id="KW-0862">Zinc</keyword>
<gene>
    <name evidence="1" type="primary">alaS</name>
    <name type="ordered locus">FTH_1079</name>
</gene>
<sequence length="865" mass="96051">MITTKELRNKFINYFESKNHSHQPSSSLIPFGDDTLLFTNAGMVQFKDVFLGIEKKDFSRAVTVQKCLRAGGKHNDLDNVGYTARHHTFFEMLGNFSFGDYFKKEAISFAWEFLTKEIKLPVEKLWVTIYASDDEAFDVWHKHIGLAKERIIRIDSSDNFWSMGDTGPCGPCTEIFYDHGEDVAGGLPGTPEQDGDRYIEIWNIVFMQYNRHADGSTTDLPKPSVDTGMGLERISAVLQNVHSNYEIDLFQALIKKAQQVTHAKDINSPSLKVIADHIRACAFLIADGVLPANEGRGYVLRRIIRRAIRHGNKVGAKEIFFYKLVAELVSQMGEAYSQLIDKRELIEKTLIKEEELFLKTIENGIKIFDAEIENLKDNTISGEVAFKLYDTYGFPFDLTADMAREKGLKVDEQAFLAQMQIQKQRSKEAGKFNVDYNSLINSQVKSEFRGYSTLIEDAKVLEIYQDGQLVASTSEQVSAVVVLDKTPFYAESGGQVGDKGILEGVGFEFVVEDVQKSGEAILHIGKLVKGRLNLNDELTARVSDKPRLATAANHSATHLLYKALKLVLGGHAEQKGSLVDENRLRFDFTHDKAISRSEIEQIELLVNQQIRANYPVTTIETSQQKAKSLGAEALFGEKYGDIVRVISMGDFSIELCGGTHVAYTGDIGLFKVTSEGSIASGVRRIEAVTADKAIRHTFTNENKIIAIKDSLKANDTNLIDKIKSMLEQIKNQEKQIAKLKKELLSGSSNDIKETSIGDIKIVVANVDGVDVKTLRNKIDDYKSKNTKVIAVLTTTNADKVQFVIGVSNALTTLIKAGDIAKELSSHIDGKGGGRADMAQGGGNNSANIDQALSQVEKFILNNIKE</sequence>
<organism>
    <name type="scientific">Francisella tularensis subsp. holarctica (strain OSU18)</name>
    <dbReference type="NCBI Taxonomy" id="393011"/>
    <lineage>
        <taxon>Bacteria</taxon>
        <taxon>Pseudomonadati</taxon>
        <taxon>Pseudomonadota</taxon>
        <taxon>Gammaproteobacteria</taxon>
        <taxon>Thiotrichales</taxon>
        <taxon>Francisellaceae</taxon>
        <taxon>Francisella</taxon>
    </lineage>
</organism>
<reference key="1">
    <citation type="journal article" date="2006" name="J. Bacteriol.">
        <title>Chromosome rearrangement and diversification of Francisella tularensis revealed by the type B (OSU18) genome sequence.</title>
        <authorList>
            <person name="Petrosino J.F."/>
            <person name="Xiang Q."/>
            <person name="Karpathy S.E."/>
            <person name="Jiang H."/>
            <person name="Yerrapragada S."/>
            <person name="Liu Y."/>
            <person name="Gioia J."/>
            <person name="Hemphill L."/>
            <person name="Gonzalez A."/>
            <person name="Raghavan T.M."/>
            <person name="Uzman A."/>
            <person name="Fox G.E."/>
            <person name="Highlander S."/>
            <person name="Reichard M."/>
            <person name="Morton R.J."/>
            <person name="Clinkenbeard K.D."/>
            <person name="Weinstock G.M."/>
        </authorList>
    </citation>
    <scope>NUCLEOTIDE SEQUENCE [LARGE SCALE GENOMIC DNA]</scope>
    <source>
        <strain>OSU18</strain>
    </source>
</reference>
<evidence type="ECO:0000255" key="1">
    <source>
        <dbReference type="HAMAP-Rule" id="MF_00036"/>
    </source>
</evidence>
<protein>
    <recommendedName>
        <fullName evidence="1">Alanine--tRNA ligase</fullName>
        <ecNumber evidence="1">6.1.1.7</ecNumber>
    </recommendedName>
    <alternativeName>
        <fullName evidence="1">Alanyl-tRNA synthetase</fullName>
        <shortName evidence="1">AlaRS</shortName>
    </alternativeName>
</protein>
<name>SYA_FRATO</name>
<proteinExistence type="inferred from homology"/>
<feature type="chain" id="PRO_0000347612" description="Alanine--tRNA ligase">
    <location>
        <begin position="1"/>
        <end position="865"/>
    </location>
</feature>
<feature type="binding site" evidence="1">
    <location>
        <position position="554"/>
    </location>
    <ligand>
        <name>Zn(2+)</name>
        <dbReference type="ChEBI" id="CHEBI:29105"/>
    </ligand>
</feature>
<feature type="binding site" evidence="1">
    <location>
        <position position="558"/>
    </location>
    <ligand>
        <name>Zn(2+)</name>
        <dbReference type="ChEBI" id="CHEBI:29105"/>
    </ligand>
</feature>
<feature type="binding site" evidence="1">
    <location>
        <position position="656"/>
    </location>
    <ligand>
        <name>Zn(2+)</name>
        <dbReference type="ChEBI" id="CHEBI:29105"/>
    </ligand>
</feature>
<feature type="binding site" evidence="1">
    <location>
        <position position="660"/>
    </location>
    <ligand>
        <name>Zn(2+)</name>
        <dbReference type="ChEBI" id="CHEBI:29105"/>
    </ligand>
</feature>
<dbReference type="EC" id="6.1.1.7" evidence="1"/>
<dbReference type="EMBL" id="CP000437">
    <property type="protein sequence ID" value="ABI82955.1"/>
    <property type="molecule type" value="Genomic_DNA"/>
</dbReference>
<dbReference type="RefSeq" id="WP_003016055.1">
    <property type="nucleotide sequence ID" value="NC_017463.1"/>
</dbReference>
<dbReference type="SMR" id="Q0BLS9"/>
<dbReference type="KEGG" id="fth:FTH_1079"/>
<dbReference type="GO" id="GO:0005829">
    <property type="term" value="C:cytosol"/>
    <property type="evidence" value="ECO:0007669"/>
    <property type="project" value="TreeGrafter"/>
</dbReference>
<dbReference type="GO" id="GO:0004813">
    <property type="term" value="F:alanine-tRNA ligase activity"/>
    <property type="evidence" value="ECO:0007669"/>
    <property type="project" value="UniProtKB-UniRule"/>
</dbReference>
<dbReference type="GO" id="GO:0002161">
    <property type="term" value="F:aminoacyl-tRNA deacylase activity"/>
    <property type="evidence" value="ECO:0007669"/>
    <property type="project" value="TreeGrafter"/>
</dbReference>
<dbReference type="GO" id="GO:0005524">
    <property type="term" value="F:ATP binding"/>
    <property type="evidence" value="ECO:0007669"/>
    <property type="project" value="UniProtKB-UniRule"/>
</dbReference>
<dbReference type="GO" id="GO:0000049">
    <property type="term" value="F:tRNA binding"/>
    <property type="evidence" value="ECO:0007669"/>
    <property type="project" value="UniProtKB-KW"/>
</dbReference>
<dbReference type="GO" id="GO:0008270">
    <property type="term" value="F:zinc ion binding"/>
    <property type="evidence" value="ECO:0007669"/>
    <property type="project" value="UniProtKB-UniRule"/>
</dbReference>
<dbReference type="GO" id="GO:0006419">
    <property type="term" value="P:alanyl-tRNA aminoacylation"/>
    <property type="evidence" value="ECO:0007669"/>
    <property type="project" value="UniProtKB-UniRule"/>
</dbReference>
<dbReference type="GO" id="GO:0045892">
    <property type="term" value="P:negative regulation of DNA-templated transcription"/>
    <property type="evidence" value="ECO:0007669"/>
    <property type="project" value="TreeGrafter"/>
</dbReference>
<dbReference type="CDD" id="cd00673">
    <property type="entry name" value="AlaRS_core"/>
    <property type="match status" value="1"/>
</dbReference>
<dbReference type="FunFam" id="2.40.30.130:FF:000001">
    <property type="entry name" value="Alanine--tRNA ligase"/>
    <property type="match status" value="1"/>
</dbReference>
<dbReference type="FunFam" id="3.10.310.40:FF:000001">
    <property type="entry name" value="Alanine--tRNA ligase"/>
    <property type="match status" value="1"/>
</dbReference>
<dbReference type="FunFam" id="3.30.54.20:FF:000001">
    <property type="entry name" value="Alanine--tRNA ligase"/>
    <property type="match status" value="1"/>
</dbReference>
<dbReference type="FunFam" id="3.30.930.10:FF:000004">
    <property type="entry name" value="Alanine--tRNA ligase"/>
    <property type="match status" value="1"/>
</dbReference>
<dbReference type="FunFam" id="3.30.980.10:FF:000004">
    <property type="entry name" value="Alanine--tRNA ligase, cytoplasmic"/>
    <property type="match status" value="1"/>
</dbReference>
<dbReference type="Gene3D" id="2.40.30.130">
    <property type="match status" value="1"/>
</dbReference>
<dbReference type="Gene3D" id="3.10.310.40">
    <property type="match status" value="1"/>
</dbReference>
<dbReference type="Gene3D" id="3.30.54.20">
    <property type="match status" value="1"/>
</dbReference>
<dbReference type="Gene3D" id="6.10.250.550">
    <property type="match status" value="1"/>
</dbReference>
<dbReference type="Gene3D" id="3.30.930.10">
    <property type="entry name" value="Bira Bifunctional Protein, Domain 2"/>
    <property type="match status" value="1"/>
</dbReference>
<dbReference type="Gene3D" id="3.30.980.10">
    <property type="entry name" value="Threonyl-trna Synthetase, Chain A, domain 2"/>
    <property type="match status" value="1"/>
</dbReference>
<dbReference type="HAMAP" id="MF_00036_B">
    <property type="entry name" value="Ala_tRNA_synth_B"/>
    <property type="match status" value="1"/>
</dbReference>
<dbReference type="InterPro" id="IPR045864">
    <property type="entry name" value="aa-tRNA-synth_II/BPL/LPL"/>
</dbReference>
<dbReference type="InterPro" id="IPR002318">
    <property type="entry name" value="Ala-tRNA-lgiase_IIc"/>
</dbReference>
<dbReference type="InterPro" id="IPR018162">
    <property type="entry name" value="Ala-tRNA-ligase_IIc_anticod-bd"/>
</dbReference>
<dbReference type="InterPro" id="IPR018165">
    <property type="entry name" value="Ala-tRNA-synth_IIc_core"/>
</dbReference>
<dbReference type="InterPro" id="IPR018164">
    <property type="entry name" value="Ala-tRNA-synth_IIc_N"/>
</dbReference>
<dbReference type="InterPro" id="IPR050058">
    <property type="entry name" value="Ala-tRNA_ligase"/>
</dbReference>
<dbReference type="InterPro" id="IPR023033">
    <property type="entry name" value="Ala_tRNA_ligase_euk/bac"/>
</dbReference>
<dbReference type="InterPro" id="IPR003156">
    <property type="entry name" value="DHHA1_dom"/>
</dbReference>
<dbReference type="InterPro" id="IPR018163">
    <property type="entry name" value="Thr/Ala-tRNA-synth_IIc_edit"/>
</dbReference>
<dbReference type="InterPro" id="IPR009000">
    <property type="entry name" value="Transl_B-barrel_sf"/>
</dbReference>
<dbReference type="InterPro" id="IPR012947">
    <property type="entry name" value="tRNA_SAD"/>
</dbReference>
<dbReference type="NCBIfam" id="TIGR00344">
    <property type="entry name" value="alaS"/>
    <property type="match status" value="1"/>
</dbReference>
<dbReference type="PANTHER" id="PTHR11777:SF9">
    <property type="entry name" value="ALANINE--TRNA LIGASE, CYTOPLASMIC"/>
    <property type="match status" value="1"/>
</dbReference>
<dbReference type="PANTHER" id="PTHR11777">
    <property type="entry name" value="ALANYL-TRNA SYNTHETASE"/>
    <property type="match status" value="1"/>
</dbReference>
<dbReference type="Pfam" id="PF02272">
    <property type="entry name" value="DHHA1"/>
    <property type="match status" value="1"/>
</dbReference>
<dbReference type="Pfam" id="PF01411">
    <property type="entry name" value="tRNA-synt_2c"/>
    <property type="match status" value="1"/>
</dbReference>
<dbReference type="Pfam" id="PF07973">
    <property type="entry name" value="tRNA_SAD"/>
    <property type="match status" value="1"/>
</dbReference>
<dbReference type="PRINTS" id="PR00980">
    <property type="entry name" value="TRNASYNTHALA"/>
</dbReference>
<dbReference type="SMART" id="SM00863">
    <property type="entry name" value="tRNA_SAD"/>
    <property type="match status" value="1"/>
</dbReference>
<dbReference type="SUPFAM" id="SSF55681">
    <property type="entry name" value="Class II aaRS and biotin synthetases"/>
    <property type="match status" value="1"/>
</dbReference>
<dbReference type="SUPFAM" id="SSF101353">
    <property type="entry name" value="Putative anticodon-binding domain of alanyl-tRNA synthetase (AlaRS)"/>
    <property type="match status" value="1"/>
</dbReference>
<dbReference type="SUPFAM" id="SSF55186">
    <property type="entry name" value="ThrRS/AlaRS common domain"/>
    <property type="match status" value="1"/>
</dbReference>
<dbReference type="SUPFAM" id="SSF50447">
    <property type="entry name" value="Translation proteins"/>
    <property type="match status" value="1"/>
</dbReference>
<dbReference type="PROSITE" id="PS50860">
    <property type="entry name" value="AA_TRNA_LIGASE_II_ALA"/>
    <property type="match status" value="1"/>
</dbReference>
<comment type="function">
    <text evidence="1">Catalyzes the attachment of alanine to tRNA(Ala) in a two-step reaction: alanine is first activated by ATP to form Ala-AMP and then transferred to the acceptor end of tRNA(Ala). Also edits incorrectly charged Ser-tRNA(Ala) and Gly-tRNA(Ala) via its editing domain.</text>
</comment>
<comment type="catalytic activity">
    <reaction evidence="1">
        <text>tRNA(Ala) + L-alanine + ATP = L-alanyl-tRNA(Ala) + AMP + diphosphate</text>
        <dbReference type="Rhea" id="RHEA:12540"/>
        <dbReference type="Rhea" id="RHEA-COMP:9657"/>
        <dbReference type="Rhea" id="RHEA-COMP:9923"/>
        <dbReference type="ChEBI" id="CHEBI:30616"/>
        <dbReference type="ChEBI" id="CHEBI:33019"/>
        <dbReference type="ChEBI" id="CHEBI:57972"/>
        <dbReference type="ChEBI" id="CHEBI:78442"/>
        <dbReference type="ChEBI" id="CHEBI:78497"/>
        <dbReference type="ChEBI" id="CHEBI:456215"/>
        <dbReference type="EC" id="6.1.1.7"/>
    </reaction>
</comment>
<comment type="cofactor">
    <cofactor evidence="1">
        <name>Zn(2+)</name>
        <dbReference type="ChEBI" id="CHEBI:29105"/>
    </cofactor>
    <text evidence="1">Binds 1 zinc ion per subunit.</text>
</comment>
<comment type="subcellular location">
    <subcellularLocation>
        <location evidence="1">Cytoplasm</location>
    </subcellularLocation>
</comment>
<comment type="domain">
    <text evidence="1">Consists of three domains; the N-terminal catalytic domain, the editing domain and the C-terminal C-Ala domain. The editing domain removes incorrectly charged amino acids, while the C-Ala domain, along with tRNA(Ala), serves as a bridge to cooperatively bring together the editing and aminoacylation centers thus stimulating deacylation of misacylated tRNAs.</text>
</comment>
<comment type="similarity">
    <text evidence="1">Belongs to the class-II aminoacyl-tRNA synthetase family.</text>
</comment>